<dbReference type="EMBL" id="AM933172">
    <property type="protein sequence ID" value="CAR31730.1"/>
    <property type="molecule type" value="Genomic_DNA"/>
</dbReference>
<dbReference type="RefSeq" id="WP_001286419.1">
    <property type="nucleotide sequence ID" value="NC_011294.1"/>
</dbReference>
<dbReference type="SMR" id="B5R2N6"/>
<dbReference type="KEGG" id="set:SEN0142"/>
<dbReference type="HOGENOM" id="CLU_178280_3_1_6"/>
<dbReference type="Proteomes" id="UP000000613">
    <property type="component" value="Chromosome"/>
</dbReference>
<dbReference type="GO" id="GO:0008657">
    <property type="term" value="F:DNA topoisomerase type II (double strand cut, ATP-hydrolyzing) inhibitor activity"/>
    <property type="evidence" value="ECO:0007669"/>
    <property type="project" value="UniProtKB-UniRule"/>
</dbReference>
<dbReference type="GO" id="GO:0008270">
    <property type="term" value="F:zinc ion binding"/>
    <property type="evidence" value="ECO:0007669"/>
    <property type="project" value="UniProtKB-UniRule"/>
</dbReference>
<dbReference type="GO" id="GO:0006355">
    <property type="term" value="P:regulation of DNA-templated transcription"/>
    <property type="evidence" value="ECO:0007669"/>
    <property type="project" value="InterPro"/>
</dbReference>
<dbReference type="Gene3D" id="3.30.50.10">
    <property type="entry name" value="Erythroid Transcription Factor GATA-1, subunit A"/>
    <property type="match status" value="1"/>
</dbReference>
<dbReference type="HAMAP" id="MF_00649">
    <property type="entry name" value="DNA_gyrase_inhibitor_YacG"/>
    <property type="match status" value="1"/>
</dbReference>
<dbReference type="InterPro" id="IPR005584">
    <property type="entry name" value="DNA_gyrase_inhibitor_YacG"/>
</dbReference>
<dbReference type="InterPro" id="IPR013088">
    <property type="entry name" value="Znf_NHR/GATA"/>
</dbReference>
<dbReference type="NCBIfam" id="NF001638">
    <property type="entry name" value="PRK00418.1"/>
    <property type="match status" value="1"/>
</dbReference>
<dbReference type="PANTHER" id="PTHR36150">
    <property type="entry name" value="DNA GYRASE INHIBITOR YACG"/>
    <property type="match status" value="1"/>
</dbReference>
<dbReference type="PANTHER" id="PTHR36150:SF1">
    <property type="entry name" value="DNA GYRASE INHIBITOR YACG"/>
    <property type="match status" value="1"/>
</dbReference>
<dbReference type="Pfam" id="PF03884">
    <property type="entry name" value="YacG"/>
    <property type="match status" value="1"/>
</dbReference>
<dbReference type="SUPFAM" id="SSF57716">
    <property type="entry name" value="Glucocorticoid receptor-like (DNA-binding domain)"/>
    <property type="match status" value="1"/>
</dbReference>
<reference key="1">
    <citation type="journal article" date="2008" name="Genome Res.">
        <title>Comparative genome analysis of Salmonella enteritidis PT4 and Salmonella gallinarum 287/91 provides insights into evolutionary and host adaptation pathways.</title>
        <authorList>
            <person name="Thomson N.R."/>
            <person name="Clayton D.J."/>
            <person name="Windhorst D."/>
            <person name="Vernikos G."/>
            <person name="Davidson S."/>
            <person name="Churcher C."/>
            <person name="Quail M.A."/>
            <person name="Stevens M."/>
            <person name="Jones M.A."/>
            <person name="Watson M."/>
            <person name="Barron A."/>
            <person name="Layton A."/>
            <person name="Pickard D."/>
            <person name="Kingsley R.A."/>
            <person name="Bignell A."/>
            <person name="Clark L."/>
            <person name="Harris B."/>
            <person name="Ormond D."/>
            <person name="Abdellah Z."/>
            <person name="Brooks K."/>
            <person name="Cherevach I."/>
            <person name="Chillingworth T."/>
            <person name="Woodward J."/>
            <person name="Norberczak H."/>
            <person name="Lord A."/>
            <person name="Arrowsmith C."/>
            <person name="Jagels K."/>
            <person name="Moule S."/>
            <person name="Mungall K."/>
            <person name="Saunders M."/>
            <person name="Whitehead S."/>
            <person name="Chabalgoity J.A."/>
            <person name="Maskell D."/>
            <person name="Humphreys T."/>
            <person name="Roberts M."/>
            <person name="Barrow P.A."/>
            <person name="Dougan G."/>
            <person name="Parkhill J."/>
        </authorList>
    </citation>
    <scope>NUCLEOTIDE SEQUENCE [LARGE SCALE GENOMIC DNA]</scope>
    <source>
        <strain>P125109</strain>
    </source>
</reference>
<keyword id="KW-0479">Metal-binding</keyword>
<keyword id="KW-0862">Zinc</keyword>
<proteinExistence type="inferred from homology"/>
<evidence type="ECO:0000255" key="1">
    <source>
        <dbReference type="HAMAP-Rule" id="MF_00649"/>
    </source>
</evidence>
<gene>
    <name evidence="1" type="primary">yacG</name>
    <name type="ordered locus">SEN0142</name>
</gene>
<accession>B5R2N6</accession>
<sequence>MSDVTVVNCPTCGKPVVWGEISPFRPFCSKRCQLIDLGEWAAEEKRIASSGDQSDSDDWSEER</sequence>
<feature type="chain" id="PRO_1000130973" description="DNA gyrase inhibitor YacG">
    <location>
        <begin position="1"/>
        <end position="63"/>
    </location>
</feature>
<feature type="binding site" evidence="1">
    <location>
        <position position="9"/>
    </location>
    <ligand>
        <name>Zn(2+)</name>
        <dbReference type="ChEBI" id="CHEBI:29105"/>
    </ligand>
</feature>
<feature type="binding site" evidence="1">
    <location>
        <position position="12"/>
    </location>
    <ligand>
        <name>Zn(2+)</name>
        <dbReference type="ChEBI" id="CHEBI:29105"/>
    </ligand>
</feature>
<feature type="binding site" evidence="1">
    <location>
        <position position="28"/>
    </location>
    <ligand>
        <name>Zn(2+)</name>
        <dbReference type="ChEBI" id="CHEBI:29105"/>
    </ligand>
</feature>
<feature type="binding site" evidence="1">
    <location>
        <position position="32"/>
    </location>
    <ligand>
        <name>Zn(2+)</name>
        <dbReference type="ChEBI" id="CHEBI:29105"/>
    </ligand>
</feature>
<organism>
    <name type="scientific">Salmonella enteritidis PT4 (strain P125109)</name>
    <dbReference type="NCBI Taxonomy" id="550537"/>
    <lineage>
        <taxon>Bacteria</taxon>
        <taxon>Pseudomonadati</taxon>
        <taxon>Pseudomonadota</taxon>
        <taxon>Gammaproteobacteria</taxon>
        <taxon>Enterobacterales</taxon>
        <taxon>Enterobacteriaceae</taxon>
        <taxon>Salmonella</taxon>
    </lineage>
</organism>
<comment type="function">
    <text evidence="1">Inhibits all the catalytic activities of DNA gyrase by preventing its interaction with DNA. Acts by binding directly to the C-terminal domain of GyrB, which probably disrupts DNA binding by the gyrase.</text>
</comment>
<comment type="cofactor">
    <cofactor evidence="1">
        <name>Zn(2+)</name>
        <dbReference type="ChEBI" id="CHEBI:29105"/>
    </cofactor>
    <text evidence="1">Binds 1 zinc ion.</text>
</comment>
<comment type="subunit">
    <text evidence="1">Interacts with GyrB.</text>
</comment>
<comment type="similarity">
    <text evidence="1">Belongs to the DNA gyrase inhibitor YacG family.</text>
</comment>
<protein>
    <recommendedName>
        <fullName evidence="1">DNA gyrase inhibitor YacG</fullName>
    </recommendedName>
</protein>
<name>YACG_SALEP</name>